<evidence type="ECO:0000255" key="1">
    <source>
        <dbReference type="HAMAP-Rule" id="MF_01356"/>
    </source>
</evidence>
<proteinExistence type="inferred from homology"/>
<accession>B1X8Z9</accession>
<feature type="chain" id="PRO_0000376208" description="NADH-quinone oxidoreductase subunit B">
    <location>
        <begin position="1"/>
        <end position="220"/>
    </location>
</feature>
<feature type="binding site" evidence="1">
    <location>
        <position position="63"/>
    </location>
    <ligand>
        <name>[4Fe-4S] cluster</name>
        <dbReference type="ChEBI" id="CHEBI:49883"/>
    </ligand>
</feature>
<feature type="binding site" evidence="1">
    <location>
        <position position="64"/>
    </location>
    <ligand>
        <name>[4Fe-4S] cluster</name>
        <dbReference type="ChEBI" id="CHEBI:49883"/>
    </ligand>
</feature>
<feature type="binding site" evidence="1">
    <location>
        <position position="129"/>
    </location>
    <ligand>
        <name>[4Fe-4S] cluster</name>
        <dbReference type="ChEBI" id="CHEBI:49883"/>
    </ligand>
</feature>
<feature type="binding site" evidence="1">
    <location>
        <position position="158"/>
    </location>
    <ligand>
        <name>[4Fe-4S] cluster</name>
        <dbReference type="ChEBI" id="CHEBI:49883"/>
    </ligand>
</feature>
<sequence length="220" mass="25056">MDYTLTRIDPNGENDRYPLQKQEIVTDPLEQEVNKNVFMGKLNDMVNWGRKNSIWPYNFGLSCCYVEMVTSFTAVHDVARFGAEVLRASPRQADLMVVAGTCFTKMAPVIQRLYDQMLEPKWVISMGACANSGGMYDIYSVVQGVDKFIPVDVYIPGCPPRPEAYMQALMLLQESIGKERRPLSWVVGDQGVYRANMQSERERKRGERIAVTNLRTPDEI</sequence>
<reference key="1">
    <citation type="journal article" date="2008" name="J. Bacteriol.">
        <title>The complete genome sequence of Escherichia coli DH10B: insights into the biology of a laboratory workhorse.</title>
        <authorList>
            <person name="Durfee T."/>
            <person name="Nelson R."/>
            <person name="Baldwin S."/>
            <person name="Plunkett G. III"/>
            <person name="Burland V."/>
            <person name="Mau B."/>
            <person name="Petrosino J.F."/>
            <person name="Qin X."/>
            <person name="Muzny D.M."/>
            <person name="Ayele M."/>
            <person name="Gibbs R.A."/>
            <person name="Csorgo B."/>
            <person name="Posfai G."/>
            <person name="Weinstock G.M."/>
            <person name="Blattner F.R."/>
        </authorList>
    </citation>
    <scope>NUCLEOTIDE SEQUENCE [LARGE SCALE GENOMIC DNA]</scope>
    <source>
        <strain>K12 / DH10B</strain>
    </source>
</reference>
<protein>
    <recommendedName>
        <fullName evidence="1">NADH-quinone oxidoreductase subunit B</fullName>
        <ecNumber evidence="1">7.1.1.-</ecNumber>
    </recommendedName>
    <alternativeName>
        <fullName evidence="1">NADH dehydrogenase I subunit B</fullName>
    </alternativeName>
    <alternativeName>
        <fullName evidence="1">NDH-1 subunit B</fullName>
    </alternativeName>
</protein>
<comment type="function">
    <text evidence="1">NDH-1 shuttles electrons from NADH, via FMN and iron-sulfur (Fe-S) centers, to quinones in the respiratory chain. The immediate electron acceptor for the enzyme in this species is believed to be ubiquinone. Couples the redox reaction to proton translocation (for every two electrons transferred, four hydrogen ions are translocated across the cytoplasmic membrane), and thus conserves the redox energy in a proton gradient.</text>
</comment>
<comment type="catalytic activity">
    <reaction evidence="1">
        <text>a quinone + NADH + 5 H(+)(in) = a quinol + NAD(+) + 4 H(+)(out)</text>
        <dbReference type="Rhea" id="RHEA:57888"/>
        <dbReference type="ChEBI" id="CHEBI:15378"/>
        <dbReference type="ChEBI" id="CHEBI:24646"/>
        <dbReference type="ChEBI" id="CHEBI:57540"/>
        <dbReference type="ChEBI" id="CHEBI:57945"/>
        <dbReference type="ChEBI" id="CHEBI:132124"/>
    </reaction>
</comment>
<comment type="cofactor">
    <cofactor evidence="1">
        <name>[4Fe-4S] cluster</name>
        <dbReference type="ChEBI" id="CHEBI:49883"/>
    </cofactor>
    <text evidence="1">Binds 1 [4Fe-4S] cluster.</text>
</comment>
<comment type="subunit">
    <text evidence="1">NDH-1 is composed of 13 different subunits. Subunits NuoB, CD, E, F, and G constitute the peripheral sector of the complex.</text>
</comment>
<comment type="subcellular location">
    <subcellularLocation>
        <location evidence="1">Cell inner membrane</location>
        <topology evidence="1">Peripheral membrane protein</topology>
        <orientation evidence="1">Cytoplasmic side</orientation>
    </subcellularLocation>
</comment>
<comment type="similarity">
    <text evidence="1">Belongs to the complex I 20 kDa subunit family.</text>
</comment>
<gene>
    <name evidence="1" type="primary">nuoB</name>
    <name type="ordered locus">ECDH10B_2449</name>
</gene>
<name>NUOB_ECODH</name>
<keyword id="KW-0004">4Fe-4S</keyword>
<keyword id="KW-0997">Cell inner membrane</keyword>
<keyword id="KW-1003">Cell membrane</keyword>
<keyword id="KW-0408">Iron</keyword>
<keyword id="KW-0411">Iron-sulfur</keyword>
<keyword id="KW-0472">Membrane</keyword>
<keyword id="KW-0479">Metal-binding</keyword>
<keyword id="KW-0520">NAD</keyword>
<keyword id="KW-0874">Quinone</keyword>
<keyword id="KW-1278">Translocase</keyword>
<keyword id="KW-0813">Transport</keyword>
<keyword id="KW-0830">Ubiquinone</keyword>
<dbReference type="EC" id="7.1.1.-" evidence="1"/>
<dbReference type="EMBL" id="CP000948">
    <property type="protein sequence ID" value="ACB03446.1"/>
    <property type="molecule type" value="Genomic_DNA"/>
</dbReference>
<dbReference type="RefSeq" id="WP_000386733.1">
    <property type="nucleotide sequence ID" value="NC_010473.1"/>
</dbReference>
<dbReference type="SMR" id="B1X8Z9"/>
<dbReference type="GeneID" id="93774887"/>
<dbReference type="KEGG" id="ecd:ECDH10B_2449"/>
<dbReference type="HOGENOM" id="CLU_055737_7_3_6"/>
<dbReference type="GO" id="GO:0005886">
    <property type="term" value="C:plasma membrane"/>
    <property type="evidence" value="ECO:0007669"/>
    <property type="project" value="UniProtKB-SubCell"/>
</dbReference>
<dbReference type="GO" id="GO:0045271">
    <property type="term" value="C:respiratory chain complex I"/>
    <property type="evidence" value="ECO:0007669"/>
    <property type="project" value="TreeGrafter"/>
</dbReference>
<dbReference type="GO" id="GO:0051539">
    <property type="term" value="F:4 iron, 4 sulfur cluster binding"/>
    <property type="evidence" value="ECO:0007669"/>
    <property type="project" value="UniProtKB-KW"/>
</dbReference>
<dbReference type="GO" id="GO:0005506">
    <property type="term" value="F:iron ion binding"/>
    <property type="evidence" value="ECO:0007669"/>
    <property type="project" value="UniProtKB-UniRule"/>
</dbReference>
<dbReference type="GO" id="GO:0008137">
    <property type="term" value="F:NADH dehydrogenase (ubiquinone) activity"/>
    <property type="evidence" value="ECO:0007669"/>
    <property type="project" value="InterPro"/>
</dbReference>
<dbReference type="GO" id="GO:0050136">
    <property type="term" value="F:NADH:ubiquinone reductase (non-electrogenic) activity"/>
    <property type="evidence" value="ECO:0007669"/>
    <property type="project" value="UniProtKB-UniRule"/>
</dbReference>
<dbReference type="GO" id="GO:0048038">
    <property type="term" value="F:quinone binding"/>
    <property type="evidence" value="ECO:0007669"/>
    <property type="project" value="UniProtKB-KW"/>
</dbReference>
<dbReference type="GO" id="GO:0009060">
    <property type="term" value="P:aerobic respiration"/>
    <property type="evidence" value="ECO:0007669"/>
    <property type="project" value="TreeGrafter"/>
</dbReference>
<dbReference type="GO" id="GO:0015990">
    <property type="term" value="P:electron transport coupled proton transport"/>
    <property type="evidence" value="ECO:0007669"/>
    <property type="project" value="TreeGrafter"/>
</dbReference>
<dbReference type="FunFam" id="3.40.50.12280:FF:000002">
    <property type="entry name" value="NADH-quinone oxidoreductase subunit B"/>
    <property type="match status" value="1"/>
</dbReference>
<dbReference type="Gene3D" id="3.40.50.12280">
    <property type="match status" value="1"/>
</dbReference>
<dbReference type="HAMAP" id="MF_01356">
    <property type="entry name" value="NDH1_NuoB"/>
    <property type="match status" value="1"/>
</dbReference>
<dbReference type="InterPro" id="IPR006137">
    <property type="entry name" value="NADH_UbQ_OxRdtase-like_20kDa"/>
</dbReference>
<dbReference type="InterPro" id="IPR006138">
    <property type="entry name" value="NADH_UQ_OxRdtase_20Kd_su"/>
</dbReference>
<dbReference type="NCBIfam" id="TIGR01957">
    <property type="entry name" value="nuoB_fam"/>
    <property type="match status" value="1"/>
</dbReference>
<dbReference type="NCBIfam" id="NF005012">
    <property type="entry name" value="PRK06411.1"/>
    <property type="match status" value="1"/>
</dbReference>
<dbReference type="PANTHER" id="PTHR11995">
    <property type="entry name" value="NADH DEHYDROGENASE"/>
    <property type="match status" value="1"/>
</dbReference>
<dbReference type="PANTHER" id="PTHR11995:SF14">
    <property type="entry name" value="NADH DEHYDROGENASE [UBIQUINONE] IRON-SULFUR PROTEIN 7, MITOCHONDRIAL"/>
    <property type="match status" value="1"/>
</dbReference>
<dbReference type="Pfam" id="PF01058">
    <property type="entry name" value="Oxidored_q6"/>
    <property type="match status" value="1"/>
</dbReference>
<dbReference type="SUPFAM" id="SSF56770">
    <property type="entry name" value="HydA/Nqo6-like"/>
    <property type="match status" value="1"/>
</dbReference>
<dbReference type="PROSITE" id="PS01150">
    <property type="entry name" value="COMPLEX1_20K"/>
    <property type="match status" value="1"/>
</dbReference>
<organism>
    <name type="scientific">Escherichia coli (strain K12 / DH10B)</name>
    <dbReference type="NCBI Taxonomy" id="316385"/>
    <lineage>
        <taxon>Bacteria</taxon>
        <taxon>Pseudomonadati</taxon>
        <taxon>Pseudomonadota</taxon>
        <taxon>Gammaproteobacteria</taxon>
        <taxon>Enterobacterales</taxon>
        <taxon>Enterobacteriaceae</taxon>
        <taxon>Escherichia</taxon>
    </lineage>
</organism>